<accession>P0C546</accession>
<keyword id="KW-0472">Membrane</keyword>
<keyword id="KW-0496">Mitochondrion</keyword>
<keyword id="KW-0999">Mitochondrion inner membrane</keyword>
<keyword id="KW-1185">Reference proteome</keyword>
<keyword id="KW-0677">Repeat</keyword>
<keyword id="KW-0812">Transmembrane</keyword>
<keyword id="KW-1133">Transmembrane helix</keyword>
<keyword id="KW-0813">Transport</keyword>
<gene>
    <name type="primary">Slc25a42</name>
</gene>
<evidence type="ECO:0000250" key="1">
    <source>
        <dbReference type="UniProtKB" id="Q86VD7"/>
    </source>
</evidence>
<evidence type="ECO:0000255" key="2"/>
<evidence type="ECO:0000269" key="3">
    <source>
    </source>
</evidence>
<evidence type="ECO:0000305" key="4"/>
<reference key="1">
    <citation type="journal article" date="2004" name="Nature">
        <title>Genome sequence of the Brown Norway rat yields insights into mammalian evolution.</title>
        <authorList>
            <person name="Gibbs R.A."/>
            <person name="Weinstock G.M."/>
            <person name="Metzker M.L."/>
            <person name="Muzny D.M."/>
            <person name="Sodergren E.J."/>
            <person name="Scherer S."/>
            <person name="Scott G."/>
            <person name="Steffen D."/>
            <person name="Worley K.C."/>
            <person name="Burch P.E."/>
            <person name="Okwuonu G."/>
            <person name="Hines S."/>
            <person name="Lewis L."/>
            <person name="Deramo C."/>
            <person name="Delgado O."/>
            <person name="Dugan-Rocha S."/>
            <person name="Miner G."/>
            <person name="Morgan M."/>
            <person name="Hawes A."/>
            <person name="Gill R."/>
            <person name="Holt R.A."/>
            <person name="Adams M.D."/>
            <person name="Amanatides P.G."/>
            <person name="Baden-Tillson H."/>
            <person name="Barnstead M."/>
            <person name="Chin S."/>
            <person name="Evans C.A."/>
            <person name="Ferriera S."/>
            <person name="Fosler C."/>
            <person name="Glodek A."/>
            <person name="Gu Z."/>
            <person name="Jennings D."/>
            <person name="Kraft C.L."/>
            <person name="Nguyen T."/>
            <person name="Pfannkoch C.M."/>
            <person name="Sitter C."/>
            <person name="Sutton G.G."/>
            <person name="Venter J.C."/>
            <person name="Woodage T."/>
            <person name="Smith D."/>
            <person name="Lee H.-M."/>
            <person name="Gustafson E."/>
            <person name="Cahill P."/>
            <person name="Kana A."/>
            <person name="Doucette-Stamm L."/>
            <person name="Weinstock K."/>
            <person name="Fechtel K."/>
            <person name="Weiss R.B."/>
            <person name="Dunn D.M."/>
            <person name="Green E.D."/>
            <person name="Blakesley R.W."/>
            <person name="Bouffard G.G."/>
            <person name="De Jong P.J."/>
            <person name="Osoegawa K."/>
            <person name="Zhu B."/>
            <person name="Marra M."/>
            <person name="Schein J."/>
            <person name="Bosdet I."/>
            <person name="Fjell C."/>
            <person name="Jones S."/>
            <person name="Krzywinski M."/>
            <person name="Mathewson C."/>
            <person name="Siddiqui A."/>
            <person name="Wye N."/>
            <person name="McPherson J."/>
            <person name="Zhao S."/>
            <person name="Fraser C.M."/>
            <person name="Shetty J."/>
            <person name="Shatsman S."/>
            <person name="Geer K."/>
            <person name="Chen Y."/>
            <person name="Abramzon S."/>
            <person name="Nierman W.C."/>
            <person name="Havlak P.H."/>
            <person name="Chen R."/>
            <person name="Durbin K.J."/>
            <person name="Egan A."/>
            <person name="Ren Y."/>
            <person name="Song X.-Z."/>
            <person name="Li B."/>
            <person name="Liu Y."/>
            <person name="Qin X."/>
            <person name="Cawley S."/>
            <person name="Cooney A.J."/>
            <person name="D'Souza L.M."/>
            <person name="Martin K."/>
            <person name="Wu J.Q."/>
            <person name="Gonzalez-Garay M.L."/>
            <person name="Jackson A.R."/>
            <person name="Kalafus K.J."/>
            <person name="McLeod M.P."/>
            <person name="Milosavljevic A."/>
            <person name="Virk D."/>
            <person name="Volkov A."/>
            <person name="Wheeler D.A."/>
            <person name="Zhang Z."/>
            <person name="Bailey J.A."/>
            <person name="Eichler E.E."/>
            <person name="Tuzun E."/>
            <person name="Birney E."/>
            <person name="Mongin E."/>
            <person name="Ureta-Vidal A."/>
            <person name="Woodwark C."/>
            <person name="Zdobnov E."/>
            <person name="Bork P."/>
            <person name="Suyama M."/>
            <person name="Torrents D."/>
            <person name="Alexandersson M."/>
            <person name="Trask B.J."/>
            <person name="Young J.M."/>
            <person name="Huang H."/>
            <person name="Wang H."/>
            <person name="Xing H."/>
            <person name="Daniels S."/>
            <person name="Gietzen D."/>
            <person name="Schmidt J."/>
            <person name="Stevens K."/>
            <person name="Vitt U."/>
            <person name="Wingrove J."/>
            <person name="Camara F."/>
            <person name="Mar Alba M."/>
            <person name="Abril J.F."/>
            <person name="Guigo R."/>
            <person name="Smit A."/>
            <person name="Dubchak I."/>
            <person name="Rubin E.M."/>
            <person name="Couronne O."/>
            <person name="Poliakov A."/>
            <person name="Huebner N."/>
            <person name="Ganten D."/>
            <person name="Goesele C."/>
            <person name="Hummel O."/>
            <person name="Kreitler T."/>
            <person name="Lee Y.-A."/>
            <person name="Monti J."/>
            <person name="Schulz H."/>
            <person name="Zimdahl H."/>
            <person name="Himmelbauer H."/>
            <person name="Lehrach H."/>
            <person name="Jacob H.J."/>
            <person name="Bromberg S."/>
            <person name="Gullings-Handley J."/>
            <person name="Jensen-Seaman M.I."/>
            <person name="Kwitek A.E."/>
            <person name="Lazar J."/>
            <person name="Pasko D."/>
            <person name="Tonellato P.J."/>
            <person name="Twigger S."/>
            <person name="Ponting C.P."/>
            <person name="Duarte J.M."/>
            <person name="Rice S."/>
            <person name="Goodstadt L."/>
            <person name="Beatson S.A."/>
            <person name="Emes R.D."/>
            <person name="Winter E.E."/>
            <person name="Webber C."/>
            <person name="Brandt P."/>
            <person name="Nyakatura G."/>
            <person name="Adetobi M."/>
            <person name="Chiaromonte F."/>
            <person name="Elnitski L."/>
            <person name="Eswara P."/>
            <person name="Hardison R.C."/>
            <person name="Hou M."/>
            <person name="Kolbe D."/>
            <person name="Makova K."/>
            <person name="Miller W."/>
            <person name="Nekrutenko A."/>
            <person name="Riemer C."/>
            <person name="Schwartz S."/>
            <person name="Taylor J."/>
            <person name="Yang S."/>
            <person name="Zhang Y."/>
            <person name="Lindpaintner K."/>
            <person name="Andrews T.D."/>
            <person name="Caccamo M."/>
            <person name="Clamp M."/>
            <person name="Clarke L."/>
            <person name="Curwen V."/>
            <person name="Durbin R.M."/>
            <person name="Eyras E."/>
            <person name="Searle S.M."/>
            <person name="Cooper G.M."/>
            <person name="Batzoglou S."/>
            <person name="Brudno M."/>
            <person name="Sidow A."/>
            <person name="Stone E.A."/>
            <person name="Payseur B.A."/>
            <person name="Bourque G."/>
            <person name="Lopez-Otin C."/>
            <person name="Puente X.S."/>
            <person name="Chakrabarti K."/>
            <person name="Chatterji S."/>
            <person name="Dewey C."/>
            <person name="Pachter L."/>
            <person name="Bray N."/>
            <person name="Yap V.B."/>
            <person name="Caspi A."/>
            <person name="Tesler G."/>
            <person name="Pevzner P.A."/>
            <person name="Haussler D."/>
            <person name="Roskin K.M."/>
            <person name="Baertsch R."/>
            <person name="Clawson H."/>
            <person name="Furey T.S."/>
            <person name="Hinrichs A.S."/>
            <person name="Karolchik D."/>
            <person name="Kent W.J."/>
            <person name="Rosenbloom K.R."/>
            <person name="Trumbower H."/>
            <person name="Weirauch M."/>
            <person name="Cooper D.N."/>
            <person name="Stenson P.D."/>
            <person name="Ma B."/>
            <person name="Brent M."/>
            <person name="Arumugam M."/>
            <person name="Shteynberg D."/>
            <person name="Copley R.R."/>
            <person name="Taylor M.S."/>
            <person name="Riethman H."/>
            <person name="Mudunuri U."/>
            <person name="Peterson J."/>
            <person name="Guyer M."/>
            <person name="Felsenfeld A."/>
            <person name="Old S."/>
            <person name="Mockrin S."/>
            <person name="Collins F.S."/>
        </authorList>
    </citation>
    <scope>NUCLEOTIDE SEQUENCE [LARGE SCALE GENOMIC DNA]</scope>
    <source>
        <strain>Brown Norway</strain>
    </source>
</reference>
<reference key="2">
    <citation type="journal article" date="2006" name="Genomics">
        <title>Fourteen novel human members of mitochondrial solute carrier family 25 (SLC25) widely expressed in the central nervous system.</title>
        <authorList>
            <person name="Haitina T."/>
            <person name="Lindblom J."/>
            <person name="Renstroem T."/>
            <person name="Fredriksson R."/>
        </authorList>
    </citation>
    <scope>TISSUE SPECIFICITY</scope>
</reference>
<name>S2542_RAT</name>
<feature type="chain" id="PRO_0000291819" description="Mitochondrial coenzyme A transporter SLC25A42">
    <location>
        <begin position="1"/>
        <end position="318"/>
    </location>
</feature>
<feature type="transmembrane region" description="Helical; Name=1" evidence="2">
    <location>
        <begin position="33"/>
        <end position="53"/>
    </location>
</feature>
<feature type="transmembrane region" description="Helical; Name=2" evidence="2">
    <location>
        <begin position="89"/>
        <end position="109"/>
    </location>
</feature>
<feature type="transmembrane region" description="Helical; Name=3" evidence="2">
    <location>
        <begin position="135"/>
        <end position="155"/>
    </location>
</feature>
<feature type="transmembrane region" description="Helical; Name=4" evidence="2">
    <location>
        <begin position="186"/>
        <end position="206"/>
    </location>
</feature>
<feature type="transmembrane region" description="Helical; Name=5" evidence="2">
    <location>
        <begin position="230"/>
        <end position="250"/>
    </location>
</feature>
<feature type="transmembrane region" description="Helical; Name=6" evidence="2">
    <location>
        <begin position="293"/>
        <end position="313"/>
    </location>
</feature>
<feature type="repeat" description="Solcar 1">
    <location>
        <begin position="31"/>
        <end position="117"/>
    </location>
</feature>
<feature type="repeat" description="Solcar 2">
    <location>
        <begin position="129"/>
        <end position="214"/>
    </location>
</feature>
<feature type="repeat" description="Solcar 3">
    <location>
        <begin position="224"/>
        <end position="312"/>
    </location>
</feature>
<protein>
    <recommendedName>
        <fullName>Mitochondrial coenzyme A transporter SLC25A42</fullName>
    </recommendedName>
    <alternativeName>
        <fullName>Solute carrier family 25 member 42</fullName>
    </alternativeName>
</protein>
<comment type="function">
    <text evidence="1">Mitochondrial carrier mediating the transport of coenzyme A (CoA) in mitochondria in exchange for intramitochondrial (deoxy)adenine nucleotides and adenosine 3',5'-diphosphate.</text>
</comment>
<comment type="catalytic activity">
    <reaction evidence="1">
        <text>ADP(out) + CoA(in) = ADP(in) + CoA(out)</text>
        <dbReference type="Rhea" id="RHEA:72839"/>
        <dbReference type="ChEBI" id="CHEBI:57287"/>
        <dbReference type="ChEBI" id="CHEBI:456216"/>
    </reaction>
</comment>
<comment type="catalytic activity">
    <reaction evidence="1">
        <text>3'-dephospho-CoA(in) + ADP(out) = 3'-dephospho-CoA(out) + ADP(in)</text>
        <dbReference type="Rhea" id="RHEA:72843"/>
        <dbReference type="ChEBI" id="CHEBI:57328"/>
        <dbReference type="ChEBI" id="CHEBI:456216"/>
    </reaction>
</comment>
<comment type="catalytic activity">
    <reaction evidence="1">
        <text>adenosine 3',5'-bisphosphate(in) + ADP(out) = adenosine 3',5'-bisphosphate(out) + ADP(in)</text>
        <dbReference type="Rhea" id="RHEA:72847"/>
        <dbReference type="ChEBI" id="CHEBI:58343"/>
        <dbReference type="ChEBI" id="CHEBI:456216"/>
    </reaction>
</comment>
<comment type="catalytic activity">
    <reaction evidence="1">
        <text>AMP(in) + ADP(out) = AMP(out) + ADP(in)</text>
        <dbReference type="Rhea" id="RHEA:72851"/>
        <dbReference type="ChEBI" id="CHEBI:456215"/>
        <dbReference type="ChEBI" id="CHEBI:456216"/>
    </reaction>
</comment>
<comment type="catalytic activity">
    <reaction evidence="1">
        <text>dADP(in) + ADP(out) = dADP(out) + ADP(in)</text>
        <dbReference type="Rhea" id="RHEA:72855"/>
        <dbReference type="ChEBI" id="CHEBI:57667"/>
        <dbReference type="ChEBI" id="CHEBI:456216"/>
    </reaction>
</comment>
<comment type="catalytic activity">
    <reaction evidence="1">
        <text>ADP(in) + ATP(out) = ADP(out) + ATP(in)</text>
        <dbReference type="Rhea" id="RHEA:34999"/>
        <dbReference type="ChEBI" id="CHEBI:30616"/>
        <dbReference type="ChEBI" id="CHEBI:456216"/>
    </reaction>
</comment>
<comment type="subcellular location">
    <subcellularLocation>
        <location evidence="1">Mitochondrion inner membrane</location>
        <topology evidence="2">Multi-pass membrane protein</topology>
    </subcellularLocation>
</comment>
<comment type="tissue specificity">
    <text evidence="3">Widely expressed. Highly expressed in adipose, followed by hypothalamus and brain coronal sections containing corpus callosum, fornix, thalamus, hypothalamus, optic chiasm, pons, midbrain, and cerebellum.</text>
</comment>
<comment type="similarity">
    <text evidence="4">Belongs to the mitochondrial carrier (TC 2.A.29) family.</text>
</comment>
<proteinExistence type="evidence at transcript level"/>
<dbReference type="EMBL" id="AABR03100959">
    <property type="status" value="NOT_ANNOTATED_CDS"/>
    <property type="molecule type" value="Genomic_DNA"/>
</dbReference>
<dbReference type="EMBL" id="AABR03100708">
    <property type="status" value="NOT_ANNOTATED_CDS"/>
    <property type="molecule type" value="Genomic_DNA"/>
</dbReference>
<dbReference type="SMR" id="P0C546"/>
<dbReference type="FunCoup" id="P0C546">
    <property type="interactions" value="991"/>
</dbReference>
<dbReference type="STRING" id="10116.ENSRNOP00000027615"/>
<dbReference type="GlyGen" id="P0C546">
    <property type="glycosylation" value="1 site"/>
</dbReference>
<dbReference type="iPTMnet" id="P0C546"/>
<dbReference type="PhosphoSitePlus" id="P0C546"/>
<dbReference type="PaxDb" id="10116-ENSRNOP00000027615"/>
<dbReference type="Ensembl" id="ENSRNOT00000027615.7">
    <property type="protein sequence ID" value="ENSRNOP00000027615.6"/>
    <property type="gene ID" value="ENSRNOG00000020345.7"/>
</dbReference>
<dbReference type="UCSC" id="RGD:1592346">
    <property type="organism name" value="rat"/>
</dbReference>
<dbReference type="AGR" id="RGD:1592346"/>
<dbReference type="RGD" id="1592346">
    <property type="gene designation" value="Slc25a42"/>
</dbReference>
<dbReference type="eggNOG" id="KOG0752">
    <property type="taxonomic scope" value="Eukaryota"/>
</dbReference>
<dbReference type="GeneTree" id="ENSGT00940000158163"/>
<dbReference type="HOGENOM" id="CLU_015166_10_1_1"/>
<dbReference type="InParanoid" id="P0C546"/>
<dbReference type="OMA" id="VYERMKW"/>
<dbReference type="PhylomeDB" id="P0C546"/>
<dbReference type="Reactome" id="R-RNO-199220">
    <property type="pathway name" value="Vitamin B5 (pantothenate) metabolism"/>
</dbReference>
<dbReference type="PRO" id="PR:P0C546"/>
<dbReference type="Proteomes" id="UP000002494">
    <property type="component" value="Chromosome 16"/>
</dbReference>
<dbReference type="GO" id="GO:0005743">
    <property type="term" value="C:mitochondrial inner membrane"/>
    <property type="evidence" value="ECO:0007669"/>
    <property type="project" value="UniProtKB-SubCell"/>
</dbReference>
<dbReference type="GO" id="GO:0005739">
    <property type="term" value="C:mitochondrion"/>
    <property type="evidence" value="ECO:0000250"/>
    <property type="project" value="UniProtKB"/>
</dbReference>
<dbReference type="GO" id="GO:0043262">
    <property type="term" value="F:ADP phosphatase activity"/>
    <property type="evidence" value="ECO:0000250"/>
    <property type="project" value="UniProtKB"/>
</dbReference>
<dbReference type="GO" id="GO:0015217">
    <property type="term" value="F:ADP transmembrane transporter activity"/>
    <property type="evidence" value="ECO:0000250"/>
    <property type="project" value="UniProtKB"/>
</dbReference>
<dbReference type="GO" id="GO:0080122">
    <property type="term" value="F:AMP transmembrane transporter activity"/>
    <property type="evidence" value="ECO:0000250"/>
    <property type="project" value="UniProtKB"/>
</dbReference>
<dbReference type="GO" id="GO:0005347">
    <property type="term" value="F:ATP transmembrane transporter activity"/>
    <property type="evidence" value="ECO:0000250"/>
    <property type="project" value="UniProtKB"/>
</dbReference>
<dbReference type="GO" id="GO:0015228">
    <property type="term" value="F:coenzyme A transmembrane transporter activity"/>
    <property type="evidence" value="ECO:0000250"/>
    <property type="project" value="UniProtKB"/>
</dbReference>
<dbReference type="GO" id="GO:0015866">
    <property type="term" value="P:ADP transport"/>
    <property type="evidence" value="ECO:0000250"/>
    <property type="project" value="UniProtKB"/>
</dbReference>
<dbReference type="GO" id="GO:0080121">
    <property type="term" value="P:AMP transport"/>
    <property type="evidence" value="ECO:0000250"/>
    <property type="project" value="UniProtKB"/>
</dbReference>
<dbReference type="GO" id="GO:0015867">
    <property type="term" value="P:ATP transport"/>
    <property type="evidence" value="ECO:0000250"/>
    <property type="project" value="UniProtKB"/>
</dbReference>
<dbReference type="GO" id="GO:0035349">
    <property type="term" value="P:coenzyme A transmembrane transport"/>
    <property type="evidence" value="ECO:0000250"/>
    <property type="project" value="UniProtKB"/>
</dbReference>
<dbReference type="FunFam" id="1.50.40.10:FF:000014">
    <property type="entry name" value="mitochondrial coenzyme A transporter SLC25A42"/>
    <property type="match status" value="1"/>
</dbReference>
<dbReference type="Gene3D" id="1.50.40.10">
    <property type="entry name" value="Mitochondrial carrier domain"/>
    <property type="match status" value="1"/>
</dbReference>
<dbReference type="InterPro" id="IPR014762">
    <property type="entry name" value="DNA_mismatch_repair_CS"/>
</dbReference>
<dbReference type="InterPro" id="IPR002067">
    <property type="entry name" value="Mit_carrier"/>
</dbReference>
<dbReference type="InterPro" id="IPR018108">
    <property type="entry name" value="Mitochondrial_sb/sol_carrier"/>
</dbReference>
<dbReference type="InterPro" id="IPR023395">
    <property type="entry name" value="Mt_carrier_dom_sf"/>
</dbReference>
<dbReference type="PANTHER" id="PTHR24089">
    <property type="entry name" value="SOLUTE CARRIER FAMILY 25"/>
    <property type="match status" value="1"/>
</dbReference>
<dbReference type="Pfam" id="PF00153">
    <property type="entry name" value="Mito_carr"/>
    <property type="match status" value="3"/>
</dbReference>
<dbReference type="PRINTS" id="PR00926">
    <property type="entry name" value="MITOCARRIER"/>
</dbReference>
<dbReference type="SUPFAM" id="SSF103506">
    <property type="entry name" value="Mitochondrial carrier"/>
    <property type="match status" value="1"/>
</dbReference>
<dbReference type="PROSITE" id="PS50920">
    <property type="entry name" value="SOLCAR"/>
    <property type="match status" value="3"/>
</dbReference>
<sequence length="318" mass="35100">MDNGVQEGSVRLGEDAEAVLAGAVSTKANHRQVLSSLLSGALAGALAKTAVAPLDRTKIIFQVSSKRFSAKEAFRLLYFTYLNEGFLSLWRGNSATMVRVIPYAAIQFSAHEEYKRILGHYYGFRGEALPPWPRLLAGALAGTTAASLTYPLDLVRARMAVTPKEMYSNIFHVFIRISREEGLKTLYFGFTPTVLGVIPYAGLSFFTYESLKSLHREYSGRPQPYPFERMVFGACAGLIGQSASYPLDVVRRRMQTAGVTGHQHGSILSTLRSIVREEGAVRGLYKGLSMNWLKGPIAVGISFTTFDLMQILLRQLQS</sequence>
<organism>
    <name type="scientific">Rattus norvegicus</name>
    <name type="common">Rat</name>
    <dbReference type="NCBI Taxonomy" id="10116"/>
    <lineage>
        <taxon>Eukaryota</taxon>
        <taxon>Metazoa</taxon>
        <taxon>Chordata</taxon>
        <taxon>Craniata</taxon>
        <taxon>Vertebrata</taxon>
        <taxon>Euteleostomi</taxon>
        <taxon>Mammalia</taxon>
        <taxon>Eutheria</taxon>
        <taxon>Euarchontoglires</taxon>
        <taxon>Glires</taxon>
        <taxon>Rodentia</taxon>
        <taxon>Myomorpha</taxon>
        <taxon>Muroidea</taxon>
        <taxon>Muridae</taxon>
        <taxon>Murinae</taxon>
        <taxon>Rattus</taxon>
    </lineage>
</organism>